<proteinExistence type="inferred from homology"/>
<feature type="transit peptide" description="Mitochondrion" evidence="2">
    <location>
        <begin position="1"/>
        <end position="51"/>
    </location>
</feature>
<feature type="chain" id="PRO_0000404475" description="ATPase synthesis protein 25, mitochondrial">
    <location>
        <begin position="52"/>
        <end position="627"/>
    </location>
</feature>
<feature type="region of interest" description="Disordered" evidence="3">
    <location>
        <begin position="336"/>
        <end position="355"/>
    </location>
</feature>
<comment type="function">
    <text evidence="1">Probable mitochondrial mRNA stabilization factor.</text>
</comment>
<comment type="subcellular location">
    <subcellularLocation>
        <location evidence="1">Mitochondrion inner membrane</location>
        <topology evidence="1">Peripheral membrane protein</topology>
        <orientation evidence="1">Matrix side</orientation>
    </subcellularLocation>
</comment>
<comment type="similarity">
    <text evidence="4">Belongs to the ATP25 family.</text>
</comment>
<accession>C7YY76</accession>
<gene>
    <name type="primary">ATP25</name>
    <name type="ORF">NECHADRAFT_101229</name>
</gene>
<name>ATP25_FUSV7</name>
<sequence length="627" mass="70693">MITRPVAAALSCRQCRSAILRAVVSRPTASSLRTLPQRQARQLPILTRRFFSEEKTIEPKGERVAEVLVTPDNAPETKDTAESDDVPWFLEVEPPRHPESQHKVELPKIPEDAPEVIGPMIKYIFEDMGLDDISLLDLRDLDPPAALGPNLIMLFGTARSERHLHISSGRFVRWLRKNHSIAARADGLIGPGELRTKLRRLRKKAKLLGTNTAIIPGGDNGISTGWVCVHFSSSGDNINEAASFDDSGRFSGFGAPQTGTTVVVQCMTEARRGELDLETLWQAILKKNLQENKKARGEKFADAEELNKVLASKIQLPSSASALQWQAMQKASQQHRSYSTSARRLSPSLEREQPASNLLNEEPEFAEEPVVLDLALVQKHIQDIQLIGTPMTQEMLYNLIKGAMMTPSPNNAAKDRLSLVDQILLTAEERGMEIWNDEMFVTLIEAGLLSPCYGLEIQRAQKNLEYLMKQKGCQFNGDQVLRLMNAYAYQKDWDRFWDAFRMPPRFKMARESQHYELAYRAMALTSSQKMCIAALRWVYPEMMSQDPPILLVSPLYDSLKACLTVADPGALTWMHNASETKLINLRPVQRRRLENREFLKVMREVESIRAELMRAGLVQSESGALHQ</sequence>
<keyword id="KW-0472">Membrane</keyword>
<keyword id="KW-0496">Mitochondrion</keyword>
<keyword id="KW-0999">Mitochondrion inner membrane</keyword>
<keyword id="KW-1185">Reference proteome</keyword>
<keyword id="KW-0809">Transit peptide</keyword>
<evidence type="ECO:0000250" key="1"/>
<evidence type="ECO:0000255" key="2"/>
<evidence type="ECO:0000256" key="3">
    <source>
        <dbReference type="SAM" id="MobiDB-lite"/>
    </source>
</evidence>
<evidence type="ECO:0000305" key="4"/>
<reference key="1">
    <citation type="journal article" date="2009" name="PLoS Genet.">
        <title>The genome of Nectria haematococca: contribution of supernumerary chromosomes to gene expansion.</title>
        <authorList>
            <person name="Coleman J.J."/>
            <person name="Rounsley S.D."/>
            <person name="Rodriguez-Carres M."/>
            <person name="Kuo A."/>
            <person name="Wasmann C.C."/>
            <person name="Grimwood J."/>
            <person name="Schmutz J."/>
            <person name="Taga M."/>
            <person name="White G.J."/>
            <person name="Zhou S."/>
            <person name="Schwartz D.C."/>
            <person name="Freitag M."/>
            <person name="Ma L.-J."/>
            <person name="Danchin E.G.J."/>
            <person name="Henrissat B."/>
            <person name="Coutinho P.M."/>
            <person name="Nelson D.R."/>
            <person name="Straney D."/>
            <person name="Napoli C.A."/>
            <person name="Barker B.M."/>
            <person name="Gribskov M."/>
            <person name="Rep M."/>
            <person name="Kroken S."/>
            <person name="Molnar I."/>
            <person name="Rensing C."/>
            <person name="Kennell J.C."/>
            <person name="Zamora J."/>
            <person name="Farman M.L."/>
            <person name="Selker E.U."/>
            <person name="Salamov A."/>
            <person name="Shapiro H."/>
            <person name="Pangilinan J."/>
            <person name="Lindquist E."/>
            <person name="Lamers C."/>
            <person name="Grigoriev I.V."/>
            <person name="Geiser D.M."/>
            <person name="Covert S.F."/>
            <person name="Temporini E."/>
            <person name="VanEtten H.D."/>
        </authorList>
    </citation>
    <scope>NUCLEOTIDE SEQUENCE [LARGE SCALE GENOMIC DNA]</scope>
    <source>
        <strain>ATCC MYA-4622 / CBS 123669 / FGSC 9596 / NRRL 45880 / 77-13-4</strain>
    </source>
</reference>
<protein>
    <recommendedName>
        <fullName>ATPase synthesis protein 25, mitochondrial</fullName>
    </recommendedName>
</protein>
<dbReference type="EMBL" id="GG698903">
    <property type="protein sequence ID" value="EEU43141.1"/>
    <property type="molecule type" value="Genomic_DNA"/>
</dbReference>
<dbReference type="RefSeq" id="XP_003048854.1">
    <property type="nucleotide sequence ID" value="XM_003048808.1"/>
</dbReference>
<dbReference type="SMR" id="C7YY76"/>
<dbReference type="STRING" id="660122.C7YY76"/>
<dbReference type="EnsemblFungi" id="NechaT101229">
    <property type="protein sequence ID" value="NechaP101229"/>
    <property type="gene ID" value="NechaG101229"/>
</dbReference>
<dbReference type="GeneID" id="9667794"/>
<dbReference type="KEGG" id="nhe:NECHADRAFT_101229"/>
<dbReference type="VEuPathDB" id="FungiDB:NECHADRAFT_101229"/>
<dbReference type="eggNOG" id="ENOG502RGZN">
    <property type="taxonomic scope" value="Eukaryota"/>
</dbReference>
<dbReference type="HOGENOM" id="CLU_016140_1_0_1"/>
<dbReference type="InParanoid" id="C7YY76"/>
<dbReference type="OMA" id="CLSSWVP"/>
<dbReference type="OrthoDB" id="107372at2759"/>
<dbReference type="Proteomes" id="UP000005206">
    <property type="component" value="Unassembled WGS sequence"/>
</dbReference>
<dbReference type="GO" id="GO:0005743">
    <property type="term" value="C:mitochondrial inner membrane"/>
    <property type="evidence" value="ECO:0007669"/>
    <property type="project" value="UniProtKB-SubCell"/>
</dbReference>
<dbReference type="GO" id="GO:0140053">
    <property type="term" value="P:mitochondrial gene expression"/>
    <property type="evidence" value="ECO:0007669"/>
    <property type="project" value="InterPro"/>
</dbReference>
<dbReference type="GO" id="GO:0048255">
    <property type="term" value="P:mRNA stabilization"/>
    <property type="evidence" value="ECO:0007669"/>
    <property type="project" value="TreeGrafter"/>
</dbReference>
<dbReference type="Gene3D" id="3.30.460.10">
    <property type="entry name" value="Beta Polymerase, domain 2"/>
    <property type="match status" value="1"/>
</dbReference>
<dbReference type="InterPro" id="IPR040152">
    <property type="entry name" value="Atp25"/>
</dbReference>
<dbReference type="InterPro" id="IPR043519">
    <property type="entry name" value="NT_sf"/>
</dbReference>
<dbReference type="PANTHER" id="PTHR28087">
    <property type="entry name" value="ATPASE SYNTHESIS PROTEIN 25, MITOCHONDRIAL"/>
    <property type="match status" value="1"/>
</dbReference>
<dbReference type="PANTHER" id="PTHR28087:SF1">
    <property type="entry name" value="ATPASE SYNTHESIS PROTEIN 25, MITOCHONDRIAL"/>
    <property type="match status" value="1"/>
</dbReference>
<organism>
    <name type="scientific">Fusarium vanettenii (strain ATCC MYA-4622 / CBS 123669 / FGSC 9596 / NRRL 45880 / 77-13-4)</name>
    <name type="common">Fusarium solani subsp. pisi</name>
    <dbReference type="NCBI Taxonomy" id="660122"/>
    <lineage>
        <taxon>Eukaryota</taxon>
        <taxon>Fungi</taxon>
        <taxon>Dikarya</taxon>
        <taxon>Ascomycota</taxon>
        <taxon>Pezizomycotina</taxon>
        <taxon>Sordariomycetes</taxon>
        <taxon>Hypocreomycetidae</taxon>
        <taxon>Hypocreales</taxon>
        <taxon>Nectriaceae</taxon>
        <taxon>Fusarium</taxon>
        <taxon>Fusarium solani species complex</taxon>
        <taxon>Fusarium vanettenii</taxon>
    </lineage>
</organism>